<reference key="1">
    <citation type="journal article" date="2006" name="Proc. Natl. Acad. Sci. U.S.A.">
        <title>Genomic analysis of the uncultivated marine crenarchaeote Cenarchaeum symbiosum.</title>
        <authorList>
            <person name="Hallam S.J."/>
            <person name="Konstantinidis K.T."/>
            <person name="Putnam N."/>
            <person name="Schleper C."/>
            <person name="Watanabe Y."/>
            <person name="Sugahara J."/>
            <person name="Preston C."/>
            <person name="de la Torre J."/>
            <person name="Richardson P.M."/>
            <person name="DeLong E.F."/>
        </authorList>
    </citation>
    <scope>NUCLEOTIDE SEQUENCE [LARGE SCALE GENOMIC DNA]</scope>
    <source>
        <strain>A</strain>
    </source>
</reference>
<comment type="function">
    <text evidence="1">Acts as a chaperone.</text>
</comment>
<comment type="similarity">
    <text evidence="1">Belongs to the heat shock protein 70 family.</text>
</comment>
<dbReference type="EMBL" id="DP000238">
    <property type="protein sequence ID" value="ABK78568.1"/>
    <property type="molecule type" value="Genomic_DNA"/>
</dbReference>
<dbReference type="SMR" id="A0RZ01"/>
<dbReference type="STRING" id="414004.CENSYa_1961"/>
<dbReference type="EnsemblBacteria" id="ABK78568">
    <property type="protein sequence ID" value="ABK78568"/>
    <property type="gene ID" value="CENSYa_1961"/>
</dbReference>
<dbReference type="KEGG" id="csy:CENSYa_1961"/>
<dbReference type="PATRIC" id="fig|414004.10.peg.1795"/>
<dbReference type="HOGENOM" id="CLU_005965_2_4_2"/>
<dbReference type="Proteomes" id="UP000000758">
    <property type="component" value="Chromosome"/>
</dbReference>
<dbReference type="GO" id="GO:0005524">
    <property type="term" value="F:ATP binding"/>
    <property type="evidence" value="ECO:0007669"/>
    <property type="project" value="UniProtKB-UniRule"/>
</dbReference>
<dbReference type="GO" id="GO:0140662">
    <property type="term" value="F:ATP-dependent protein folding chaperone"/>
    <property type="evidence" value="ECO:0007669"/>
    <property type="project" value="InterPro"/>
</dbReference>
<dbReference type="GO" id="GO:0051082">
    <property type="term" value="F:unfolded protein binding"/>
    <property type="evidence" value="ECO:0007669"/>
    <property type="project" value="InterPro"/>
</dbReference>
<dbReference type="CDD" id="cd10234">
    <property type="entry name" value="ASKHA_NBD_HSP70_DnaK-like"/>
    <property type="match status" value="1"/>
</dbReference>
<dbReference type="FunFam" id="2.60.34.10:FF:000014">
    <property type="entry name" value="Chaperone protein DnaK HSP70"/>
    <property type="match status" value="1"/>
</dbReference>
<dbReference type="FunFam" id="3.30.420.40:FF:000071">
    <property type="entry name" value="Molecular chaperone DnaK"/>
    <property type="match status" value="1"/>
</dbReference>
<dbReference type="FunFam" id="3.90.640.10:FF:000003">
    <property type="entry name" value="Molecular chaperone DnaK"/>
    <property type="match status" value="1"/>
</dbReference>
<dbReference type="Gene3D" id="1.20.1270.10">
    <property type="match status" value="1"/>
</dbReference>
<dbReference type="Gene3D" id="3.30.420.40">
    <property type="match status" value="2"/>
</dbReference>
<dbReference type="Gene3D" id="3.90.640.10">
    <property type="entry name" value="Actin, Chain A, domain 4"/>
    <property type="match status" value="1"/>
</dbReference>
<dbReference type="Gene3D" id="2.60.34.10">
    <property type="entry name" value="Substrate Binding Domain Of DNAk, Chain A, domain 1"/>
    <property type="match status" value="1"/>
</dbReference>
<dbReference type="HAMAP" id="MF_00332">
    <property type="entry name" value="DnaK"/>
    <property type="match status" value="1"/>
</dbReference>
<dbReference type="InterPro" id="IPR043129">
    <property type="entry name" value="ATPase_NBD"/>
</dbReference>
<dbReference type="InterPro" id="IPR012725">
    <property type="entry name" value="Chaperone_DnaK"/>
</dbReference>
<dbReference type="InterPro" id="IPR018181">
    <property type="entry name" value="Heat_shock_70_CS"/>
</dbReference>
<dbReference type="InterPro" id="IPR029048">
    <property type="entry name" value="HSP70_C_sf"/>
</dbReference>
<dbReference type="InterPro" id="IPR029047">
    <property type="entry name" value="HSP70_peptide-bd_sf"/>
</dbReference>
<dbReference type="InterPro" id="IPR013126">
    <property type="entry name" value="Hsp_70_fam"/>
</dbReference>
<dbReference type="NCBIfam" id="NF001413">
    <property type="entry name" value="PRK00290.1"/>
    <property type="match status" value="1"/>
</dbReference>
<dbReference type="NCBIfam" id="TIGR02350">
    <property type="entry name" value="prok_dnaK"/>
    <property type="match status" value="1"/>
</dbReference>
<dbReference type="PANTHER" id="PTHR19375">
    <property type="entry name" value="HEAT SHOCK PROTEIN 70KDA"/>
    <property type="match status" value="1"/>
</dbReference>
<dbReference type="Pfam" id="PF00012">
    <property type="entry name" value="HSP70"/>
    <property type="match status" value="2"/>
</dbReference>
<dbReference type="PRINTS" id="PR00301">
    <property type="entry name" value="HEATSHOCK70"/>
</dbReference>
<dbReference type="SUPFAM" id="SSF53067">
    <property type="entry name" value="Actin-like ATPase domain"/>
    <property type="match status" value="2"/>
</dbReference>
<dbReference type="SUPFAM" id="SSF100934">
    <property type="entry name" value="Heat shock protein 70kD (HSP70), C-terminal subdomain"/>
    <property type="match status" value="1"/>
</dbReference>
<dbReference type="SUPFAM" id="SSF100920">
    <property type="entry name" value="Heat shock protein 70kD (HSP70), peptide-binding domain"/>
    <property type="match status" value="1"/>
</dbReference>
<dbReference type="PROSITE" id="PS00297">
    <property type="entry name" value="HSP70_1"/>
    <property type="match status" value="1"/>
</dbReference>
<dbReference type="PROSITE" id="PS00329">
    <property type="entry name" value="HSP70_2"/>
    <property type="match status" value="1"/>
</dbReference>
<dbReference type="PROSITE" id="PS01036">
    <property type="entry name" value="HSP70_3"/>
    <property type="match status" value="1"/>
</dbReference>
<feature type="chain" id="PRO_1000059534" description="Chaperone protein DnaK">
    <location>
        <begin position="1"/>
        <end position="656"/>
    </location>
</feature>
<feature type="region of interest" description="Disordered" evidence="2">
    <location>
        <begin position="590"/>
        <end position="656"/>
    </location>
</feature>
<feature type="compositionally biased region" description="Gly residues" evidence="2">
    <location>
        <begin position="590"/>
        <end position="605"/>
    </location>
</feature>
<feature type="compositionally biased region" description="Low complexity" evidence="2">
    <location>
        <begin position="606"/>
        <end position="621"/>
    </location>
</feature>
<feature type="compositionally biased region" description="Gly residues" evidence="2">
    <location>
        <begin position="622"/>
        <end position="635"/>
    </location>
</feature>
<proteinExistence type="inferred from homology"/>
<name>DNAK_CENSY</name>
<accession>A0RZ01</accession>
<protein>
    <recommendedName>
        <fullName evidence="1">Chaperone protein DnaK</fullName>
    </recommendedName>
    <alternativeName>
        <fullName evidence="1">HSP70</fullName>
    </alternativeName>
    <alternativeName>
        <fullName evidence="1">Heat shock 70 kDa protein</fullName>
    </alternativeName>
    <alternativeName>
        <fullName evidence="1">Heat shock protein 70</fullName>
    </alternativeName>
</protein>
<sequence length="656" mass="68225">MAKVIGIDLGTSNSAAAVVMGGKPTIIPAAEGATVGGKAFPSVVAFSKDGDLLVGEPARRQAVTNPENTIMAAKRKMGSEHIFKAGGKDYKPQQISSFILQKIKKDAEAFVGEPVGQAVITVPAYFDDNQRQATKDAGTIAGLDVVRIINEPTAASLAFGLDKSKQDMKILVFDFGGGTLDVTVMEMGGGVFEVMSTSGDTQLGGTDMDKAIIDYIVDDFRKREGVDLSQDSTALTRVREAAEKAKIELSTVMETDVNLPFISHDSSGPKNLELRLTRAKLEELVGPIIDRCRPSIEKALADAKVSPSDIAKIVMVGGPTRMPAVKKFVSSVTGKESESGVDPMEAVAMGAAIQAGIIAGDVTSDIVLLDVTPLTLGIDTLGGVREPLIERNTTIPTSKSKVFTTAVDNQTAVTIHVVQGERPMTSDNVSLGSFNLTDLPPAPRGIPQIEVKFDIDANGIINVTAKDLGTQKEAKITIESSSKLSKDEIEKLREDAEKFSDEDEKKKGKVELKNEAESFVYTAEKLINHDLKDKITQEQGIKISDGIREVKEALDQDPDILRPKLDSLKAMVNEITTEMYQQAAAQGAAGGAAGGAAGGAAGGAAGDAAGAAGDSTGDAAGAAGGPSEGPAGDAGAGESAGPEPGDDGQPKPGPAA</sequence>
<gene>
    <name evidence="1" type="primary">dnaK</name>
    <name type="ordered locus">CENSYa_1961</name>
</gene>
<organism>
    <name type="scientific">Cenarchaeum symbiosum (strain A)</name>
    <dbReference type="NCBI Taxonomy" id="414004"/>
    <lineage>
        <taxon>Archaea</taxon>
        <taxon>Nitrososphaerota</taxon>
        <taxon>Candidatus Cenarchaeales</taxon>
        <taxon>Candidatus Cenarchaeaceae</taxon>
        <taxon>Candidatus Cenarchaeum</taxon>
    </lineage>
</organism>
<evidence type="ECO:0000255" key="1">
    <source>
        <dbReference type="HAMAP-Rule" id="MF_00332"/>
    </source>
</evidence>
<evidence type="ECO:0000256" key="2">
    <source>
        <dbReference type="SAM" id="MobiDB-lite"/>
    </source>
</evidence>
<keyword id="KW-0067">ATP-binding</keyword>
<keyword id="KW-0143">Chaperone</keyword>
<keyword id="KW-0547">Nucleotide-binding</keyword>
<keyword id="KW-1185">Reference proteome</keyword>